<accession>P26226</accession>
<proteinExistence type="evidence at protein level"/>
<evidence type="ECO:0000250" key="1"/>
<evidence type="ECO:0000255" key="2">
    <source>
        <dbReference type="PROSITE-ProRule" id="PRU00031"/>
    </source>
</evidence>
<feature type="chain" id="PRO_0000155425" description="Hemolymph trypsin inhibitor A">
    <location>
        <begin position="1"/>
        <end position="56" status="greater than"/>
    </location>
</feature>
<feature type="domain" description="BPTI/Kunitz inhibitor" evidence="2">
    <location>
        <begin position="22"/>
        <end position="56" status="greater than"/>
    </location>
</feature>
<feature type="site" description="Reactive bond for trypsin" evidence="1">
    <location>
        <begin position="32"/>
        <end position="33"/>
    </location>
</feature>
<feature type="disulfide bond" evidence="2">
    <location>
        <begin position="22"/>
        <end status="unknown"/>
    </location>
</feature>
<feature type="disulfide bond" evidence="2">
    <location>
        <begin position="31"/>
        <end position="55"/>
    </location>
</feature>
<feature type="disulfide bond" evidence="2">
    <location>
        <begin position="47"/>
        <end status="unknown"/>
    </location>
</feature>
<feature type="unsure residue">
    <location>
        <position position="55"/>
    </location>
</feature>
<feature type="non-terminal residue">
    <location>
        <position position="56"/>
    </location>
</feature>
<protein>
    <recommendedName>
        <fullName>Hemolymph trypsin inhibitor A</fullName>
    </recommendedName>
    <alternativeName>
        <fullName>BPI-type</fullName>
    </alternativeName>
</protein>
<reference key="1">
    <citation type="journal article" date="1988" name="J. Biol. Chem.">
        <title>Purification and characterization of two trypsin inhibitors from the hemolymph of Manduca sexta larvae.</title>
        <authorList>
            <person name="Ramesh N."/>
            <person name="Sugumaran M."/>
            <person name="Mole J.E."/>
        </authorList>
    </citation>
    <scope>PROTEIN SEQUENCE</scope>
    <source>
        <tissue>Larval hemolymph</tissue>
    </source>
</reference>
<name>HTIA_MANSE</name>
<dbReference type="PIR" id="A29235">
    <property type="entry name" value="A29235"/>
</dbReference>
<dbReference type="OrthoDB" id="4473401at2759"/>
<dbReference type="GO" id="GO:0004867">
    <property type="term" value="F:serine-type endopeptidase inhibitor activity"/>
    <property type="evidence" value="ECO:0007669"/>
    <property type="project" value="UniProtKB-KW"/>
</dbReference>
<dbReference type="Gene3D" id="4.10.410.10">
    <property type="entry name" value="Pancreatic trypsin inhibitor Kunitz domain"/>
    <property type="match status" value="1"/>
</dbReference>
<dbReference type="InterPro" id="IPR002223">
    <property type="entry name" value="Kunitz_BPTI"/>
</dbReference>
<dbReference type="InterPro" id="IPR036880">
    <property type="entry name" value="Kunitz_BPTI_sf"/>
</dbReference>
<dbReference type="Pfam" id="PF00014">
    <property type="entry name" value="Kunitz_BPTI"/>
    <property type="match status" value="1"/>
</dbReference>
<dbReference type="SMART" id="SM00131">
    <property type="entry name" value="KU"/>
    <property type="match status" value="1"/>
</dbReference>
<dbReference type="SUPFAM" id="SSF57362">
    <property type="entry name" value="BPTI-like"/>
    <property type="match status" value="1"/>
</dbReference>
<dbReference type="PROSITE" id="PS50279">
    <property type="entry name" value="BPTI_KUNITZ_2"/>
    <property type="match status" value="1"/>
</dbReference>
<sequence length="56" mass="6284">AGLYKPPNNIESENEVYTGNICFLPLEVGVCRALFFRYGYDPAIKACXEFMYGGCQ</sequence>
<comment type="function">
    <text>Inhibits trypsin.</text>
</comment>
<organism>
    <name type="scientific">Manduca sexta</name>
    <name type="common">Tobacco hawkmoth</name>
    <name type="synonym">Tobacco hornworm</name>
    <dbReference type="NCBI Taxonomy" id="7130"/>
    <lineage>
        <taxon>Eukaryota</taxon>
        <taxon>Metazoa</taxon>
        <taxon>Ecdysozoa</taxon>
        <taxon>Arthropoda</taxon>
        <taxon>Hexapoda</taxon>
        <taxon>Insecta</taxon>
        <taxon>Pterygota</taxon>
        <taxon>Neoptera</taxon>
        <taxon>Endopterygota</taxon>
        <taxon>Lepidoptera</taxon>
        <taxon>Glossata</taxon>
        <taxon>Ditrysia</taxon>
        <taxon>Bombycoidea</taxon>
        <taxon>Sphingidae</taxon>
        <taxon>Sphinginae</taxon>
        <taxon>Sphingini</taxon>
        <taxon>Manduca</taxon>
    </lineage>
</organism>
<keyword id="KW-0903">Direct protein sequencing</keyword>
<keyword id="KW-1015">Disulfide bond</keyword>
<keyword id="KW-0646">Protease inhibitor</keyword>
<keyword id="KW-0722">Serine protease inhibitor</keyword>